<evidence type="ECO:0000250" key="1"/>
<evidence type="ECO:0000255" key="2"/>
<evidence type="ECO:0000305" key="3"/>
<feature type="initiator methionine" description="Removed" evidence="1">
    <location>
        <position position="1"/>
    </location>
</feature>
<feature type="chain" id="PRO_0000139712" description="Large ribosomal subunit protein eL37">
    <location>
        <begin position="2"/>
        <end position="83"/>
    </location>
</feature>
<feature type="zinc finger region" description="C4-type" evidence="2">
    <location>
        <begin position="19"/>
        <end position="37"/>
    </location>
</feature>
<feature type="binding site" evidence="1">
    <location>
        <position position="19"/>
    </location>
    <ligand>
        <name>Zn(2+)</name>
        <dbReference type="ChEBI" id="CHEBI:29105"/>
    </ligand>
</feature>
<feature type="binding site" evidence="1">
    <location>
        <position position="22"/>
    </location>
    <ligand>
        <name>Zn(2+)</name>
        <dbReference type="ChEBI" id="CHEBI:29105"/>
    </ligand>
</feature>
<feature type="binding site" evidence="1">
    <location>
        <position position="34"/>
    </location>
    <ligand>
        <name>Zn(2+)</name>
        <dbReference type="ChEBI" id="CHEBI:29105"/>
    </ligand>
</feature>
<feature type="binding site" evidence="1">
    <location>
        <position position="37"/>
    </location>
    <ligand>
        <name>Zn(2+)</name>
        <dbReference type="ChEBI" id="CHEBI:29105"/>
    </ligand>
</feature>
<reference key="1">
    <citation type="submission" date="1995-09" db="EMBL/GenBank/DDBJ databases">
        <title>Ribosomal protein L37 in Leishmania is encoded by duplicate genes.</title>
        <authorList>
            <person name="Devos T."/>
            <person name="Merlin G."/>
            <person name="Venkataraman M.V.K."/>
            <person name="Myler P.J."/>
            <person name="Stuart K."/>
        </authorList>
    </citation>
    <scope>NUCLEOTIDE SEQUENCE [MRNA]</scope>
    <source>
        <strain>MHOM/SD/00/Khartoum / LSB-51.1</strain>
    </source>
</reference>
<protein>
    <recommendedName>
        <fullName evidence="3">Large ribosomal subunit protein eL37</fullName>
    </recommendedName>
    <alternativeName>
        <fullName>60S ribosomal protein L37</fullName>
    </alternativeName>
</protein>
<dbReference type="EMBL" id="U35461">
    <property type="protein sequence ID" value="AAA79065.1"/>
    <property type="molecule type" value="mRNA"/>
</dbReference>
<dbReference type="RefSeq" id="XP_003864032.1">
    <property type="nucleotide sequence ID" value="XM_003863984.1"/>
</dbReference>
<dbReference type="PDB" id="3JCS">
    <property type="method" value="EM"/>
    <property type="resolution" value="2.80 A"/>
    <property type="chains" value="j=1-83"/>
</dbReference>
<dbReference type="PDB" id="5T2A">
    <property type="method" value="EM"/>
    <property type="resolution" value="2.90 A"/>
    <property type="chains" value="l=1-83"/>
</dbReference>
<dbReference type="PDB" id="6AZ3">
    <property type="method" value="EM"/>
    <property type="resolution" value="2.50 A"/>
    <property type="chains" value="j=2-81"/>
</dbReference>
<dbReference type="PDBsum" id="3JCS"/>
<dbReference type="PDBsum" id="5T2A"/>
<dbReference type="PDBsum" id="6AZ3"/>
<dbReference type="EMDB" id="EMD-7025"/>
<dbReference type="SMR" id="P62885"/>
<dbReference type="KEGG" id="ldo:LDBPK_332070"/>
<dbReference type="VEuPathDB" id="TriTrypDB:LdBPK_332070.1"/>
<dbReference type="VEuPathDB" id="TriTrypDB:LdCL_330027600"/>
<dbReference type="VEuPathDB" id="TriTrypDB:LDHU3_33.2990"/>
<dbReference type="OMA" id="RMAYLKH"/>
<dbReference type="OrthoDB" id="274614at2759"/>
<dbReference type="GO" id="GO:0022625">
    <property type="term" value="C:cytosolic large ribosomal subunit"/>
    <property type="evidence" value="ECO:0007669"/>
    <property type="project" value="TreeGrafter"/>
</dbReference>
<dbReference type="GO" id="GO:0019843">
    <property type="term" value="F:rRNA binding"/>
    <property type="evidence" value="ECO:0007669"/>
    <property type="project" value="UniProtKB-KW"/>
</dbReference>
<dbReference type="GO" id="GO:0003735">
    <property type="term" value="F:structural constituent of ribosome"/>
    <property type="evidence" value="ECO:0007669"/>
    <property type="project" value="InterPro"/>
</dbReference>
<dbReference type="GO" id="GO:0008270">
    <property type="term" value="F:zinc ion binding"/>
    <property type="evidence" value="ECO:0007669"/>
    <property type="project" value="UniProtKB-KW"/>
</dbReference>
<dbReference type="GO" id="GO:0006412">
    <property type="term" value="P:translation"/>
    <property type="evidence" value="ECO:0007669"/>
    <property type="project" value="InterPro"/>
</dbReference>
<dbReference type="FunFam" id="2.20.25.30:FF:000004">
    <property type="entry name" value="Ribosomal protein L37"/>
    <property type="match status" value="1"/>
</dbReference>
<dbReference type="Gene3D" id="2.20.25.30">
    <property type="match status" value="1"/>
</dbReference>
<dbReference type="InterPro" id="IPR001569">
    <property type="entry name" value="Ribosomal_eL37"/>
</dbReference>
<dbReference type="InterPro" id="IPR011331">
    <property type="entry name" value="Ribosomal_eL37/eL43"/>
</dbReference>
<dbReference type="InterPro" id="IPR018267">
    <property type="entry name" value="Ribosomal_eL37_CS"/>
</dbReference>
<dbReference type="InterPro" id="IPR011332">
    <property type="entry name" value="Ribosomal_zn-bd"/>
</dbReference>
<dbReference type="NCBIfam" id="NF003214">
    <property type="entry name" value="PRK04179.1"/>
    <property type="match status" value="1"/>
</dbReference>
<dbReference type="PANTHER" id="PTHR10768">
    <property type="entry name" value="60S RIBOSOMAL PROTEIN L37"/>
    <property type="match status" value="1"/>
</dbReference>
<dbReference type="PANTHER" id="PTHR10768:SF0">
    <property type="entry name" value="RIBOSOMAL PROTEIN L37"/>
    <property type="match status" value="1"/>
</dbReference>
<dbReference type="Pfam" id="PF01907">
    <property type="entry name" value="Ribosomal_L37e"/>
    <property type="match status" value="1"/>
</dbReference>
<dbReference type="SUPFAM" id="SSF57829">
    <property type="entry name" value="Zn-binding ribosomal proteins"/>
    <property type="match status" value="1"/>
</dbReference>
<dbReference type="PROSITE" id="PS01077">
    <property type="entry name" value="RIBOSOMAL_L37E"/>
    <property type="match status" value="1"/>
</dbReference>
<keyword id="KW-0002">3D-structure</keyword>
<keyword id="KW-0479">Metal-binding</keyword>
<keyword id="KW-0687">Ribonucleoprotein</keyword>
<keyword id="KW-0689">Ribosomal protein</keyword>
<keyword id="KW-0694">RNA-binding</keyword>
<keyword id="KW-0699">rRNA-binding</keyword>
<keyword id="KW-0862">Zinc</keyword>
<keyword id="KW-0863">Zinc-finger</keyword>
<gene>
    <name type="primary">RPL37</name>
</gene>
<name>RL37_LEIDO</name>
<accession>P62885</accession>
<accession>P39094</accession>
<proteinExistence type="evidence at protein level"/>
<comment type="function">
    <text evidence="1">Binds to the 23S rRNA.</text>
</comment>
<comment type="cofactor">
    <cofactor evidence="1">
        <name>Zn(2+)</name>
        <dbReference type="ChEBI" id="CHEBI:29105"/>
    </cofactor>
    <text evidence="1">Binds 1 zinc ion per subunit.</text>
</comment>
<comment type="similarity">
    <text evidence="3">Belongs to the eukaryotic ribosomal protein eL37 family.</text>
</comment>
<sequence length="83" mass="9835">MTKGTTSMGQRHGRTHILCRRCGRNSYHVQWERCAACAYPRASRRRYNWSVKAIKRRRTGTGRCRYLKVVNRRIANHFKTPKA</sequence>
<organism>
    <name type="scientific">Leishmania donovani</name>
    <dbReference type="NCBI Taxonomy" id="5661"/>
    <lineage>
        <taxon>Eukaryota</taxon>
        <taxon>Discoba</taxon>
        <taxon>Euglenozoa</taxon>
        <taxon>Kinetoplastea</taxon>
        <taxon>Metakinetoplastina</taxon>
        <taxon>Trypanosomatida</taxon>
        <taxon>Trypanosomatidae</taxon>
        <taxon>Leishmaniinae</taxon>
        <taxon>Leishmania</taxon>
    </lineage>
</organism>